<organism>
    <name type="scientific">Burkholderia lata (strain ATCC 17760 / DSM 23089 / LMG 22485 / NCIMB 9086 / R18194 / 383)</name>
    <dbReference type="NCBI Taxonomy" id="482957"/>
    <lineage>
        <taxon>Bacteria</taxon>
        <taxon>Pseudomonadati</taxon>
        <taxon>Pseudomonadota</taxon>
        <taxon>Betaproteobacteria</taxon>
        <taxon>Burkholderiales</taxon>
        <taxon>Burkholderiaceae</taxon>
        <taxon>Burkholderia</taxon>
        <taxon>Burkholderia cepacia complex</taxon>
    </lineage>
</organism>
<reference key="1">
    <citation type="submission" date="2005-10" db="EMBL/GenBank/DDBJ databases">
        <title>Complete sequence of chromosome 1 of Burkholderia sp. 383.</title>
        <authorList>
            <consortium name="US DOE Joint Genome Institute"/>
            <person name="Copeland A."/>
            <person name="Lucas S."/>
            <person name="Lapidus A."/>
            <person name="Barry K."/>
            <person name="Detter J.C."/>
            <person name="Glavina T."/>
            <person name="Hammon N."/>
            <person name="Israni S."/>
            <person name="Pitluck S."/>
            <person name="Chain P."/>
            <person name="Malfatti S."/>
            <person name="Shin M."/>
            <person name="Vergez L."/>
            <person name="Schmutz J."/>
            <person name="Larimer F."/>
            <person name="Land M."/>
            <person name="Kyrpides N."/>
            <person name="Lykidis A."/>
            <person name="Richardson P."/>
        </authorList>
    </citation>
    <scope>NUCLEOTIDE SEQUENCE [LARGE SCALE GENOMIC DNA]</scope>
    <source>
        <strain>ATCC 17760 / DSM 23089 / LMG 22485 / NCIMB 9086 / R18194 / 383</strain>
    </source>
</reference>
<accession>Q39F41</accession>
<dbReference type="EC" id="2.7.7.59" evidence="1"/>
<dbReference type="EC" id="3.1.4.-" evidence="1"/>
<dbReference type="EMBL" id="CP000151">
    <property type="protein sequence ID" value="ABB08925.1"/>
    <property type="molecule type" value="Genomic_DNA"/>
</dbReference>
<dbReference type="RefSeq" id="WP_011352463.1">
    <property type="nucleotide sequence ID" value="NC_007510.1"/>
</dbReference>
<dbReference type="SMR" id="Q39F41"/>
<dbReference type="GeneID" id="45095207"/>
<dbReference type="KEGG" id="bur:Bcep18194_A5331"/>
<dbReference type="PATRIC" id="fig|482957.22.peg.2281"/>
<dbReference type="HOGENOM" id="CLU_012833_0_0_4"/>
<dbReference type="Proteomes" id="UP000002705">
    <property type="component" value="Chromosome 1"/>
</dbReference>
<dbReference type="GO" id="GO:0008773">
    <property type="term" value="F:[protein-PII] uridylyltransferase activity"/>
    <property type="evidence" value="ECO:0007669"/>
    <property type="project" value="UniProtKB-UniRule"/>
</dbReference>
<dbReference type="GO" id="GO:0008081">
    <property type="term" value="F:phosphoric diester hydrolase activity"/>
    <property type="evidence" value="ECO:0007669"/>
    <property type="project" value="UniProtKB-UniRule"/>
</dbReference>
<dbReference type="GO" id="GO:0009399">
    <property type="term" value="P:nitrogen fixation"/>
    <property type="evidence" value="ECO:0007669"/>
    <property type="project" value="UniProtKB-UniRule"/>
</dbReference>
<dbReference type="GO" id="GO:0006808">
    <property type="term" value="P:regulation of nitrogen utilization"/>
    <property type="evidence" value="ECO:0007669"/>
    <property type="project" value="UniProtKB-UniRule"/>
</dbReference>
<dbReference type="CDD" id="cd04899">
    <property type="entry name" value="ACT_ACR-UUR-like_2"/>
    <property type="match status" value="1"/>
</dbReference>
<dbReference type="CDD" id="cd04900">
    <property type="entry name" value="ACT_UUR-like_1"/>
    <property type="match status" value="1"/>
</dbReference>
<dbReference type="CDD" id="cd00077">
    <property type="entry name" value="HDc"/>
    <property type="match status" value="1"/>
</dbReference>
<dbReference type="CDD" id="cd05401">
    <property type="entry name" value="NT_GlnE_GlnD_like"/>
    <property type="match status" value="1"/>
</dbReference>
<dbReference type="Gene3D" id="3.30.70.260">
    <property type="match status" value="1"/>
</dbReference>
<dbReference type="Gene3D" id="3.30.460.10">
    <property type="entry name" value="Beta Polymerase, domain 2"/>
    <property type="match status" value="1"/>
</dbReference>
<dbReference type="Gene3D" id="1.10.3210.10">
    <property type="entry name" value="Hypothetical protein af1432"/>
    <property type="match status" value="1"/>
</dbReference>
<dbReference type="Gene3D" id="1.20.120.330">
    <property type="entry name" value="Nucleotidyltransferases domain 2"/>
    <property type="match status" value="1"/>
</dbReference>
<dbReference type="HAMAP" id="MF_00277">
    <property type="entry name" value="PII_uridylyl_transf"/>
    <property type="match status" value="1"/>
</dbReference>
<dbReference type="InterPro" id="IPR045865">
    <property type="entry name" value="ACT-like_dom_sf"/>
</dbReference>
<dbReference type="InterPro" id="IPR002912">
    <property type="entry name" value="ACT_dom"/>
</dbReference>
<dbReference type="InterPro" id="IPR003607">
    <property type="entry name" value="HD/PDEase_dom"/>
</dbReference>
<dbReference type="InterPro" id="IPR006674">
    <property type="entry name" value="HD_domain"/>
</dbReference>
<dbReference type="InterPro" id="IPR043519">
    <property type="entry name" value="NT_sf"/>
</dbReference>
<dbReference type="InterPro" id="IPR013546">
    <property type="entry name" value="PII_UdlTrfase/GS_AdlTrfase"/>
</dbReference>
<dbReference type="InterPro" id="IPR002934">
    <property type="entry name" value="Polymerase_NTP_transf_dom"/>
</dbReference>
<dbReference type="InterPro" id="IPR010043">
    <property type="entry name" value="UTase/UR"/>
</dbReference>
<dbReference type="NCBIfam" id="NF002837">
    <property type="entry name" value="PRK03059.1"/>
    <property type="match status" value="1"/>
</dbReference>
<dbReference type="NCBIfam" id="TIGR01693">
    <property type="entry name" value="UTase_glnD"/>
    <property type="match status" value="1"/>
</dbReference>
<dbReference type="PANTHER" id="PTHR47320">
    <property type="entry name" value="BIFUNCTIONAL URIDYLYLTRANSFERASE/URIDYLYL-REMOVING ENZYME"/>
    <property type="match status" value="1"/>
</dbReference>
<dbReference type="PANTHER" id="PTHR47320:SF1">
    <property type="entry name" value="BIFUNCTIONAL URIDYLYLTRANSFERASE_URIDYLYL-REMOVING ENZYME"/>
    <property type="match status" value="1"/>
</dbReference>
<dbReference type="Pfam" id="PF08335">
    <property type="entry name" value="GlnD_UR_UTase"/>
    <property type="match status" value="1"/>
</dbReference>
<dbReference type="Pfam" id="PF01966">
    <property type="entry name" value="HD"/>
    <property type="match status" value="1"/>
</dbReference>
<dbReference type="Pfam" id="PF01909">
    <property type="entry name" value="NTP_transf_2"/>
    <property type="match status" value="1"/>
</dbReference>
<dbReference type="PIRSF" id="PIRSF006288">
    <property type="entry name" value="PII_uridyltransf"/>
    <property type="match status" value="1"/>
</dbReference>
<dbReference type="SMART" id="SM00471">
    <property type="entry name" value="HDc"/>
    <property type="match status" value="1"/>
</dbReference>
<dbReference type="SUPFAM" id="SSF55021">
    <property type="entry name" value="ACT-like"/>
    <property type="match status" value="2"/>
</dbReference>
<dbReference type="SUPFAM" id="SSF109604">
    <property type="entry name" value="HD-domain/PDEase-like"/>
    <property type="match status" value="1"/>
</dbReference>
<dbReference type="SUPFAM" id="SSF81301">
    <property type="entry name" value="Nucleotidyltransferase"/>
    <property type="match status" value="1"/>
</dbReference>
<dbReference type="SUPFAM" id="SSF81593">
    <property type="entry name" value="Nucleotidyltransferase substrate binding subunit/domain"/>
    <property type="match status" value="1"/>
</dbReference>
<dbReference type="PROSITE" id="PS51671">
    <property type="entry name" value="ACT"/>
    <property type="match status" value="2"/>
</dbReference>
<dbReference type="PROSITE" id="PS51831">
    <property type="entry name" value="HD"/>
    <property type="match status" value="1"/>
</dbReference>
<gene>
    <name evidence="1" type="primary">glnD</name>
    <name type="ordered locus">Bcep18194_A5331</name>
</gene>
<name>GLND_BURL3</name>
<evidence type="ECO:0000255" key="1">
    <source>
        <dbReference type="HAMAP-Rule" id="MF_00277"/>
    </source>
</evidence>
<evidence type="ECO:0000255" key="2">
    <source>
        <dbReference type="PROSITE-ProRule" id="PRU01175"/>
    </source>
</evidence>
<feature type="chain" id="PRO_0000231680" description="Bifunctional uridylyltransferase/uridylyl-removing enzyme">
    <location>
        <begin position="1"/>
        <end position="858"/>
    </location>
</feature>
<feature type="domain" description="HD" evidence="2">
    <location>
        <begin position="443"/>
        <end position="565"/>
    </location>
</feature>
<feature type="domain" description="ACT 1" evidence="1">
    <location>
        <begin position="682"/>
        <end position="761"/>
    </location>
</feature>
<feature type="domain" description="ACT 2" evidence="1">
    <location>
        <begin position="790"/>
        <end position="858"/>
    </location>
</feature>
<feature type="region of interest" description="Uridylyltransferase">
    <location>
        <begin position="1"/>
        <end position="324"/>
    </location>
</feature>
<feature type="region of interest" description="Uridylyl-removing">
    <location>
        <begin position="325"/>
        <end position="681"/>
    </location>
</feature>
<protein>
    <recommendedName>
        <fullName evidence="1">Bifunctional uridylyltransferase/uridylyl-removing enzyme</fullName>
        <shortName evidence="1">UTase/UR</shortName>
    </recommendedName>
    <alternativeName>
        <fullName evidence="1">Bifunctional [protein-PII] modification enzyme</fullName>
    </alternativeName>
    <alternativeName>
        <fullName evidence="1">Bifunctional nitrogen sensor protein</fullName>
    </alternativeName>
    <domain>
        <recommendedName>
            <fullName evidence="1">[Protein-PII] uridylyltransferase</fullName>
            <shortName evidence="1">PII uridylyltransferase</shortName>
            <shortName evidence="1">UTase</shortName>
            <ecNumber evidence="1">2.7.7.59</ecNumber>
        </recommendedName>
    </domain>
    <domain>
        <recommendedName>
            <fullName evidence="1">[Protein-PII]-UMP uridylyl-removing enzyme</fullName>
            <shortName evidence="1">UR</shortName>
            <ecNumber evidence="1">3.1.4.-</ecNumber>
        </recommendedName>
    </domain>
</protein>
<sequence>MSAHAAPSPEALSRRAEFKAAKTEMLERFRRAANVASLMHALSKLTDEALKRVWDDCGLPATLALVAVGGYGRGELAPYSDVDILVLLPDAHDPALDARIERFIGMAWDLGLEIGSSVRTVAQCIEEASQDVTVQTSLLEARRIVGSTALFERFTVHYHEALDARAFFTAKVLEMRQRHAKFQDTPYSLEPNVKESPGGLRDLQTILWIARAAGFGSSWRELDTRGLITDREARELRRNEGFLKTLRARLHVIAGRRQDMLVFDLQTQAAESFGYEPTQAKRASEQLMRRYYWAAKAVTQLATILIQNIEAQLFPATSGITRVLSPDRFVEKQGMLEIVDDGVFERHPDAILEAFLLYETTRGVKGLSARTLRALYNSREIMNNTWRRDPQNRDTFMRILQQPEGITHAFRLMNQTSVLGRYLLNFRRIVGQMQHDLYHVYTVDQHILMVLRNIRRFAVAEHAHEYPFCSQLIGNFERPWVLYVAALFHDIAKGRGGDHSTLGMADARRFCREHGIASDDAALIVWLVQHHLTMSQVAQKQDTSDPEVIKRFAEVVGNERYLTALYLLTVADIRGTSPKVWNTWKGKLLEDLYRITLAVLGGANPDAHSELKSRQEQALALLRLETVPDDAHRTLWDQLDVGFFLRHDAADIAWQTRVLYRHVNAETAIVRARPSPIGDALQVLVYVKDRPDLFAGICAYFDRNGLSVLDARVSTTRHGYALDNFIVTQTERDVRYRDIANLVEQQLASRLTETAPLPEPSKGRLSRLSRTFPITPRVDLRADERGQYYILSVSANDRPGLLYSIARVLAEHRIGVHAARINTLGERVEDIFLLAGAGLSDNRLQIQLETELLRAIAV</sequence>
<keyword id="KW-0378">Hydrolase</keyword>
<keyword id="KW-0460">Magnesium</keyword>
<keyword id="KW-0511">Multifunctional enzyme</keyword>
<keyword id="KW-0535">Nitrogen fixation</keyword>
<keyword id="KW-0548">Nucleotidyltransferase</keyword>
<keyword id="KW-0677">Repeat</keyword>
<keyword id="KW-0808">Transferase</keyword>
<comment type="function">
    <text evidence="1">Modifies, by uridylylation and deuridylylation, the PII regulatory proteins (GlnB and homologs), in response to the nitrogen status of the cell that GlnD senses through the glutamine level. Under low glutamine levels, catalyzes the conversion of the PII proteins and UTP to PII-UMP and PPi, while under higher glutamine levels, GlnD hydrolyzes PII-UMP to PII and UMP (deuridylylation). Thus, controls uridylylation state and activity of the PII proteins, and plays an important role in the regulation of nitrogen fixation and metabolism.</text>
</comment>
<comment type="catalytic activity">
    <reaction evidence="1">
        <text>[protein-PII]-L-tyrosine + UTP = [protein-PII]-uridylyl-L-tyrosine + diphosphate</text>
        <dbReference type="Rhea" id="RHEA:13673"/>
        <dbReference type="Rhea" id="RHEA-COMP:12147"/>
        <dbReference type="Rhea" id="RHEA-COMP:12148"/>
        <dbReference type="ChEBI" id="CHEBI:33019"/>
        <dbReference type="ChEBI" id="CHEBI:46398"/>
        <dbReference type="ChEBI" id="CHEBI:46858"/>
        <dbReference type="ChEBI" id="CHEBI:90602"/>
        <dbReference type="EC" id="2.7.7.59"/>
    </reaction>
</comment>
<comment type="catalytic activity">
    <reaction evidence="1">
        <text>[protein-PII]-uridylyl-L-tyrosine + H2O = [protein-PII]-L-tyrosine + UMP + H(+)</text>
        <dbReference type="Rhea" id="RHEA:48600"/>
        <dbReference type="Rhea" id="RHEA-COMP:12147"/>
        <dbReference type="Rhea" id="RHEA-COMP:12148"/>
        <dbReference type="ChEBI" id="CHEBI:15377"/>
        <dbReference type="ChEBI" id="CHEBI:15378"/>
        <dbReference type="ChEBI" id="CHEBI:46858"/>
        <dbReference type="ChEBI" id="CHEBI:57865"/>
        <dbReference type="ChEBI" id="CHEBI:90602"/>
    </reaction>
</comment>
<comment type="cofactor">
    <cofactor evidence="1">
        <name>Mg(2+)</name>
        <dbReference type="ChEBI" id="CHEBI:18420"/>
    </cofactor>
</comment>
<comment type="activity regulation">
    <text evidence="1">Uridylyltransferase (UTase) activity is inhibited by glutamine, while glutamine activates uridylyl-removing (UR) activity.</text>
</comment>
<comment type="domain">
    <text evidence="1">Has four distinct domains: an N-terminal nucleotidyltransferase (NT) domain responsible for UTase activity, a central HD domain that encodes UR activity, and two C-terminal ACT domains that seem to have a role in glutamine sensing.</text>
</comment>
<comment type="similarity">
    <text evidence="1">Belongs to the GlnD family.</text>
</comment>
<proteinExistence type="inferred from homology"/>